<reference key="1">
    <citation type="journal article" date="2006" name="BMC Genomics">
        <title>The genome of the square archaeon Haloquadratum walsbyi: life at the limits of water activity.</title>
        <authorList>
            <person name="Bolhuis H."/>
            <person name="Palm P."/>
            <person name="Wende A."/>
            <person name="Falb M."/>
            <person name="Rampp M."/>
            <person name="Rodriguez-Valera F."/>
            <person name="Pfeiffer F."/>
            <person name="Oesterhelt D."/>
        </authorList>
    </citation>
    <scope>NUCLEOTIDE SEQUENCE [LARGE SCALE GENOMIC DNA]</scope>
    <source>
        <strain>DSM 16790 / HBSQ001</strain>
    </source>
</reference>
<gene>
    <name evidence="2" type="primary">fen</name>
    <name type="ordered locus">HQ_2418A</name>
</gene>
<keyword id="KW-0227">DNA damage</keyword>
<keyword id="KW-0234">DNA repair</keyword>
<keyword id="KW-0235">DNA replication</keyword>
<keyword id="KW-0255">Endonuclease</keyword>
<keyword id="KW-0269">Exonuclease</keyword>
<keyword id="KW-0378">Hydrolase</keyword>
<keyword id="KW-0460">Magnesium</keyword>
<keyword id="KW-0479">Metal-binding</keyword>
<keyword id="KW-0540">Nuclease</keyword>
<keyword id="KW-1185">Reference proteome</keyword>
<comment type="function">
    <text evidence="1">Structure-specific nuclease with 5'-flap endonuclease and 5'-3' exonuclease activities involved in DNA replication and repair. During DNA replication, cleaves the 5'-overhanging flap structure that is generated by displacement synthesis when DNA polymerase encounters the 5'-end of a downstream Okazaki fragment. Binds the unpaired 3'-DNA end and kinks the DNA to facilitate 5' cleavage specificity. Cleaves one nucleotide into the double-stranded DNA from the junction in flap DNA, leaving a nick for ligation. Also involved in the base excision repair (BER) pathway. Acts as a genome stabilization factor that prevents flaps from equilibrating into structures that lead to duplications and deletions. Also possesses 5'-3' exonuclease activity on nicked or gapped double-stranded DNA (By similarity).</text>
</comment>
<comment type="cofactor">
    <cofactor evidence="2">
        <name>Mg(2+)</name>
        <dbReference type="ChEBI" id="CHEBI:18420"/>
    </cofactor>
    <text evidence="2">Binds 2 magnesium ions per subunit. They probably participate in the reaction catalyzed by the enzyme. May bind an additional third magnesium ion after substrate binding.</text>
</comment>
<comment type="subunit">
    <text evidence="2">Interacts with PCNA. PCNA stimulates the nuclease activity without altering cleavage specificity.</text>
</comment>
<comment type="similarity">
    <text evidence="2">Belongs to the XPG/RAD2 endonuclease family. FEN1 subfamily.</text>
</comment>
<evidence type="ECO:0000250" key="1"/>
<evidence type="ECO:0000255" key="2">
    <source>
        <dbReference type="HAMAP-Rule" id="MF_00614"/>
    </source>
</evidence>
<feature type="chain" id="PRO_1000200236" description="Flap endonuclease 1">
    <location>
        <begin position="1"/>
        <end position="326"/>
    </location>
</feature>
<feature type="region of interest" description="N-domain">
    <location>
        <begin position="1"/>
        <end position="100"/>
    </location>
</feature>
<feature type="region of interest" description="I-domain">
    <location>
        <begin position="118"/>
        <end position="246"/>
    </location>
</feature>
<feature type="region of interest" description="Interaction with PCNA" evidence="2">
    <location>
        <begin position="318"/>
        <end position="326"/>
    </location>
</feature>
<feature type="binding site" evidence="2">
    <location>
        <position position="28"/>
    </location>
    <ligand>
        <name>Mg(2+)</name>
        <dbReference type="ChEBI" id="CHEBI:18420"/>
        <label>1</label>
    </ligand>
</feature>
<feature type="binding site" evidence="2">
    <location>
        <position position="82"/>
    </location>
    <ligand>
        <name>Mg(2+)</name>
        <dbReference type="ChEBI" id="CHEBI:18420"/>
        <label>1</label>
    </ligand>
</feature>
<feature type="binding site" evidence="2">
    <location>
        <position position="154"/>
    </location>
    <ligand>
        <name>Mg(2+)</name>
        <dbReference type="ChEBI" id="CHEBI:18420"/>
        <label>1</label>
    </ligand>
</feature>
<feature type="binding site" evidence="2">
    <location>
        <position position="156"/>
    </location>
    <ligand>
        <name>Mg(2+)</name>
        <dbReference type="ChEBI" id="CHEBI:18420"/>
        <label>1</label>
    </ligand>
</feature>
<feature type="binding site" evidence="2">
    <location>
        <position position="175"/>
    </location>
    <ligand>
        <name>Mg(2+)</name>
        <dbReference type="ChEBI" id="CHEBI:18420"/>
        <label>2</label>
    </ligand>
</feature>
<feature type="binding site" evidence="2">
    <location>
        <position position="177"/>
    </location>
    <ligand>
        <name>Mg(2+)</name>
        <dbReference type="ChEBI" id="CHEBI:18420"/>
        <label>2</label>
    </ligand>
</feature>
<feature type="binding site" evidence="2">
    <location>
        <position position="225"/>
    </location>
    <ligand>
        <name>Mg(2+)</name>
        <dbReference type="ChEBI" id="CHEBI:18420"/>
        <label>2</label>
    </ligand>
</feature>
<organism>
    <name type="scientific">Haloquadratum walsbyi (strain DSM 16790 / HBSQ001)</name>
    <dbReference type="NCBI Taxonomy" id="362976"/>
    <lineage>
        <taxon>Archaea</taxon>
        <taxon>Methanobacteriati</taxon>
        <taxon>Methanobacteriota</taxon>
        <taxon>Stenosarchaea group</taxon>
        <taxon>Halobacteria</taxon>
        <taxon>Halobacteriales</taxon>
        <taxon>Haloferacaceae</taxon>
        <taxon>Haloquadratum</taxon>
    </lineage>
</organism>
<sequence>MGNAALRQLAALESVAFDDISGSVIAVDAHNWLYRYLTTTVKFTSDAAYTTESGVEVANLIGVVQGLPKFFEHDLTPVFVFDGGVTELKDEEVQERRVAREEAVELQAAAEERGDELAASRLEARTQRLTETIHETTRGLLNRLDVPIIEAPAEGEAQAAEMAIRGDVDYVGSEDYDTLLFGAPYTVRQLTSKGDPELMDLQTTLKNQNLTREQLVDVAILCGTDFNDGISGIGPATAISAINDHGDLWSVLDARDEFIQHADRVRSLFLDPPVTNEYTLHTTINPDMDAARSYVVDDWEVPADEVERGFERIETSVVQTGLDEWI</sequence>
<protein>
    <recommendedName>
        <fullName evidence="2">Flap endonuclease 1</fullName>
        <shortName evidence="2">FEN-1</shortName>
        <ecNumber evidence="2">3.1.-.-</ecNumber>
    </recommendedName>
    <alternativeName>
        <fullName evidence="2">Flap structure-specific endonuclease 1</fullName>
    </alternativeName>
</protein>
<accession>Q18HK0</accession>
<dbReference type="EC" id="3.1.-.-" evidence="2"/>
<dbReference type="EMBL" id="AM180088">
    <property type="protein sequence ID" value="CAJ52538.1"/>
    <property type="molecule type" value="Genomic_DNA"/>
</dbReference>
<dbReference type="RefSeq" id="WP_011571661.1">
    <property type="nucleotide sequence ID" value="NC_008212.1"/>
</dbReference>
<dbReference type="SMR" id="Q18HK0"/>
<dbReference type="STRING" id="362976.HQ_2418A"/>
<dbReference type="GeneID" id="4194560"/>
<dbReference type="KEGG" id="hwa:HQ_2418A"/>
<dbReference type="eggNOG" id="arCOG04050">
    <property type="taxonomic scope" value="Archaea"/>
</dbReference>
<dbReference type="HOGENOM" id="CLU_032444_0_0_2"/>
<dbReference type="Proteomes" id="UP000001975">
    <property type="component" value="Chromosome"/>
</dbReference>
<dbReference type="GO" id="GO:0008409">
    <property type="term" value="F:5'-3' exonuclease activity"/>
    <property type="evidence" value="ECO:0007669"/>
    <property type="project" value="UniProtKB-UniRule"/>
</dbReference>
<dbReference type="GO" id="GO:0017108">
    <property type="term" value="F:5'-flap endonuclease activity"/>
    <property type="evidence" value="ECO:0007669"/>
    <property type="project" value="UniProtKB-UniRule"/>
</dbReference>
<dbReference type="GO" id="GO:0003677">
    <property type="term" value="F:DNA binding"/>
    <property type="evidence" value="ECO:0007669"/>
    <property type="project" value="UniProtKB-UniRule"/>
</dbReference>
<dbReference type="GO" id="GO:0000287">
    <property type="term" value="F:magnesium ion binding"/>
    <property type="evidence" value="ECO:0007669"/>
    <property type="project" value="UniProtKB-UniRule"/>
</dbReference>
<dbReference type="GO" id="GO:0006281">
    <property type="term" value="P:DNA repair"/>
    <property type="evidence" value="ECO:0007669"/>
    <property type="project" value="UniProtKB-UniRule"/>
</dbReference>
<dbReference type="GO" id="GO:0043137">
    <property type="term" value="P:DNA replication, removal of RNA primer"/>
    <property type="evidence" value="ECO:0007669"/>
    <property type="project" value="UniProtKB-UniRule"/>
</dbReference>
<dbReference type="CDD" id="cd09903">
    <property type="entry name" value="H3TH_FEN1-Arc"/>
    <property type="match status" value="1"/>
</dbReference>
<dbReference type="CDD" id="cd09867">
    <property type="entry name" value="PIN_FEN1"/>
    <property type="match status" value="1"/>
</dbReference>
<dbReference type="Gene3D" id="1.10.150.20">
    <property type="entry name" value="5' to 3' exonuclease, C-terminal subdomain"/>
    <property type="match status" value="1"/>
</dbReference>
<dbReference type="Gene3D" id="3.40.50.1010">
    <property type="entry name" value="5'-nuclease"/>
    <property type="match status" value="1"/>
</dbReference>
<dbReference type="HAMAP" id="MF_00614">
    <property type="entry name" value="Fen"/>
    <property type="match status" value="1"/>
</dbReference>
<dbReference type="InterPro" id="IPR036279">
    <property type="entry name" value="5-3_exonuclease_C_sf"/>
</dbReference>
<dbReference type="InterPro" id="IPR023426">
    <property type="entry name" value="Flap_endonuc"/>
</dbReference>
<dbReference type="InterPro" id="IPR019973">
    <property type="entry name" value="Flap_endonuc_arc"/>
</dbReference>
<dbReference type="InterPro" id="IPR008918">
    <property type="entry name" value="HhH2"/>
</dbReference>
<dbReference type="InterPro" id="IPR029060">
    <property type="entry name" value="PIN-like_dom_sf"/>
</dbReference>
<dbReference type="InterPro" id="IPR006086">
    <property type="entry name" value="XPG-I_dom"/>
</dbReference>
<dbReference type="InterPro" id="IPR006084">
    <property type="entry name" value="XPG/Rad2"/>
</dbReference>
<dbReference type="InterPro" id="IPR019974">
    <property type="entry name" value="XPG_CS"/>
</dbReference>
<dbReference type="InterPro" id="IPR006085">
    <property type="entry name" value="XPG_DNA_repair_N"/>
</dbReference>
<dbReference type="NCBIfam" id="TIGR03674">
    <property type="entry name" value="fen_arch"/>
    <property type="match status" value="1"/>
</dbReference>
<dbReference type="PANTHER" id="PTHR11081:SF9">
    <property type="entry name" value="FLAP ENDONUCLEASE 1"/>
    <property type="match status" value="1"/>
</dbReference>
<dbReference type="PANTHER" id="PTHR11081">
    <property type="entry name" value="FLAP ENDONUCLEASE FAMILY MEMBER"/>
    <property type="match status" value="1"/>
</dbReference>
<dbReference type="Pfam" id="PF00867">
    <property type="entry name" value="XPG_I"/>
    <property type="match status" value="1"/>
</dbReference>
<dbReference type="Pfam" id="PF00752">
    <property type="entry name" value="XPG_N"/>
    <property type="match status" value="1"/>
</dbReference>
<dbReference type="PRINTS" id="PR00853">
    <property type="entry name" value="XPGRADSUPER"/>
</dbReference>
<dbReference type="SMART" id="SM00279">
    <property type="entry name" value="HhH2"/>
    <property type="match status" value="1"/>
</dbReference>
<dbReference type="SMART" id="SM00484">
    <property type="entry name" value="XPGI"/>
    <property type="match status" value="1"/>
</dbReference>
<dbReference type="SMART" id="SM00485">
    <property type="entry name" value="XPGN"/>
    <property type="match status" value="1"/>
</dbReference>
<dbReference type="SUPFAM" id="SSF47807">
    <property type="entry name" value="5' to 3' exonuclease, C-terminal subdomain"/>
    <property type="match status" value="1"/>
</dbReference>
<dbReference type="SUPFAM" id="SSF88723">
    <property type="entry name" value="PIN domain-like"/>
    <property type="match status" value="1"/>
</dbReference>
<dbReference type="PROSITE" id="PS00841">
    <property type="entry name" value="XPG_1"/>
    <property type="match status" value="1"/>
</dbReference>
<proteinExistence type="inferred from homology"/>
<name>FEN_HALWD</name>